<sequence>MSSSFFCFFLFCFQTCLIQNVYSQCLGRVGPGGPPLGPYGGPLGGPGYGPVGYGGCGGYGGSGIGNVAVAGELPVAGSAAVLGQVPVIGAVEFAGPACAVGSVSISGACGPTCGCGGSPYY</sequence>
<proteinExistence type="evidence at transcript level"/>
<evidence type="ECO:0000305" key="1"/>
<gene>
    <name type="primary">ERA.4</name>
</gene>
<name>CHCA4_BOMMO</name>
<organism>
    <name type="scientific">Bombyx mori</name>
    <name type="common">Silk moth</name>
    <dbReference type="NCBI Taxonomy" id="7091"/>
    <lineage>
        <taxon>Eukaryota</taxon>
        <taxon>Metazoa</taxon>
        <taxon>Ecdysozoa</taxon>
        <taxon>Arthropoda</taxon>
        <taxon>Hexapoda</taxon>
        <taxon>Insecta</taxon>
        <taxon>Pterygota</taxon>
        <taxon>Neoptera</taxon>
        <taxon>Endopterygota</taxon>
        <taxon>Lepidoptera</taxon>
        <taxon>Glossata</taxon>
        <taxon>Ditrysia</taxon>
        <taxon>Bombycoidea</taxon>
        <taxon>Bombycidae</taxon>
        <taxon>Bombycinae</taxon>
        <taxon>Bombyx</taxon>
    </lineage>
</organism>
<dbReference type="EMBL" id="X58447">
    <property type="protein sequence ID" value="CAA41353.1"/>
    <property type="molecule type" value="Genomic_DNA"/>
</dbReference>
<dbReference type="EMBL" id="M13834">
    <property type="protein sequence ID" value="AAA27828.1"/>
    <property type="molecule type" value="mRNA"/>
</dbReference>
<dbReference type="PIR" id="S24293">
    <property type="entry name" value="S24293"/>
</dbReference>
<dbReference type="RefSeq" id="NP_001112373.1">
    <property type="nucleotide sequence ID" value="NM_001118901.1"/>
</dbReference>
<dbReference type="EnsemblMetazoa" id="NM_001118901.1">
    <property type="protein sequence ID" value="NP_001112373.1"/>
    <property type="gene ID" value="GeneID_693017"/>
</dbReference>
<dbReference type="GeneID" id="693017"/>
<dbReference type="KEGG" id="bmor:693017"/>
<dbReference type="CTD" id="693017"/>
<dbReference type="InParanoid" id="P08829"/>
<dbReference type="OrthoDB" id="660270at7088"/>
<dbReference type="Proteomes" id="UP000005204">
    <property type="component" value="Unassembled WGS sequence"/>
</dbReference>
<dbReference type="GO" id="GO:0042600">
    <property type="term" value="C:egg chorion"/>
    <property type="evidence" value="ECO:0007669"/>
    <property type="project" value="InterPro"/>
</dbReference>
<dbReference type="GO" id="GO:0005213">
    <property type="term" value="F:structural constituent of egg chorion"/>
    <property type="evidence" value="ECO:0007669"/>
    <property type="project" value="InterPro"/>
</dbReference>
<dbReference type="GO" id="GO:0007304">
    <property type="term" value="P:chorion-containing eggshell formation"/>
    <property type="evidence" value="ECO:0007669"/>
    <property type="project" value="InterPro"/>
</dbReference>
<dbReference type="InterPro" id="IPR002635">
    <property type="entry name" value="Chorion"/>
</dbReference>
<dbReference type="Pfam" id="PF01723">
    <property type="entry name" value="Chorion_1"/>
    <property type="match status" value="2"/>
</dbReference>
<reference key="1">
    <citation type="journal article" date="1991" name="Genetics">
        <title>Sequence identity in an early chorion multigene family is the result of localized gene conversion.</title>
        <authorList>
            <person name="Hibner B.L."/>
            <person name="Burke W.D."/>
            <person name="Eickbush T.H."/>
        </authorList>
    </citation>
    <scope>NUCLEOTIDE SEQUENCE [GENOMIC DNA]</scope>
    <source>
        <strain>703</strain>
    </source>
</reference>
<reference key="2">
    <citation type="journal article" date="1986" name="Proc. Natl. Acad. Sci. U.S.A.">
        <title>Evolution of the silk moth chorion gene superfamily: gene families CA and CB.</title>
        <authorList>
            <person name="Lecanidou R."/>
            <person name="Rodakis G.C."/>
            <person name="Eickbush T.H."/>
            <person name="Kafatos F.C."/>
        </authorList>
    </citation>
    <scope>NUCLEOTIDE SEQUENCE [MRNA] OF 16-121</scope>
</reference>
<keyword id="KW-1185">Reference proteome</keyword>
<keyword id="KW-0677">Repeat</keyword>
<keyword id="KW-0732">Signal</keyword>
<accession>P08829</accession>
<protein>
    <recommendedName>
        <fullName>Chorion class CA protein ERA.4</fullName>
    </recommendedName>
    <alternativeName>
        <fullName>M6C11</fullName>
    </alternativeName>
</protein>
<feature type="signal peptide">
    <location>
        <begin position="1"/>
        <end position="23"/>
    </location>
</feature>
<feature type="chain" id="PRO_0000005379" description="Chorion class CA protein ERA.4">
    <location>
        <begin position="24"/>
        <end position="121"/>
    </location>
</feature>
<feature type="region of interest" description="Left arm">
    <location>
        <begin position="24"/>
        <end position="57"/>
    </location>
</feature>
<feature type="region of interest" description="Central domain">
    <location>
        <begin position="58"/>
        <end position="105"/>
    </location>
</feature>
<feature type="region of interest" description="Right arm">
    <location>
        <begin position="106"/>
        <end position="121"/>
    </location>
</feature>
<comment type="function">
    <text>This protein is one of many from the eggshell of the silk moth.</text>
</comment>
<comment type="similarity">
    <text evidence="1">Belongs to the chorion protein family.</text>
</comment>